<feature type="chain" id="PRO_1000140696" description="Small ribosomal subunit protein uS4">
    <location>
        <begin position="1"/>
        <end position="207"/>
    </location>
</feature>
<feature type="domain" description="S4 RNA-binding" evidence="1">
    <location>
        <begin position="97"/>
        <end position="160"/>
    </location>
</feature>
<feature type="region of interest" description="Disordered" evidence="2">
    <location>
        <begin position="31"/>
        <end position="55"/>
    </location>
</feature>
<feature type="compositionally biased region" description="Polar residues" evidence="2">
    <location>
        <begin position="42"/>
        <end position="53"/>
    </location>
</feature>
<dbReference type="EMBL" id="CP001025">
    <property type="protein sequence ID" value="ACB62802.1"/>
    <property type="molecule type" value="Genomic_DNA"/>
</dbReference>
<dbReference type="RefSeq" id="WP_012362893.1">
    <property type="nucleotide sequence ID" value="NC_010551.1"/>
</dbReference>
<dbReference type="SMR" id="B1YRQ4"/>
<dbReference type="GeneID" id="93051692"/>
<dbReference type="KEGG" id="bac:BamMC406_0301"/>
<dbReference type="HOGENOM" id="CLU_092403_0_2_4"/>
<dbReference type="OrthoDB" id="9803672at2"/>
<dbReference type="Proteomes" id="UP000001680">
    <property type="component" value="Chromosome 1"/>
</dbReference>
<dbReference type="GO" id="GO:0015935">
    <property type="term" value="C:small ribosomal subunit"/>
    <property type="evidence" value="ECO:0007669"/>
    <property type="project" value="InterPro"/>
</dbReference>
<dbReference type="GO" id="GO:0019843">
    <property type="term" value="F:rRNA binding"/>
    <property type="evidence" value="ECO:0007669"/>
    <property type="project" value="UniProtKB-UniRule"/>
</dbReference>
<dbReference type="GO" id="GO:0003735">
    <property type="term" value="F:structural constituent of ribosome"/>
    <property type="evidence" value="ECO:0007669"/>
    <property type="project" value="InterPro"/>
</dbReference>
<dbReference type="GO" id="GO:0042274">
    <property type="term" value="P:ribosomal small subunit biogenesis"/>
    <property type="evidence" value="ECO:0007669"/>
    <property type="project" value="TreeGrafter"/>
</dbReference>
<dbReference type="GO" id="GO:0006412">
    <property type="term" value="P:translation"/>
    <property type="evidence" value="ECO:0007669"/>
    <property type="project" value="UniProtKB-UniRule"/>
</dbReference>
<dbReference type="CDD" id="cd00165">
    <property type="entry name" value="S4"/>
    <property type="match status" value="1"/>
</dbReference>
<dbReference type="FunFam" id="1.10.1050.10:FF:000001">
    <property type="entry name" value="30S ribosomal protein S4"/>
    <property type="match status" value="1"/>
</dbReference>
<dbReference type="FunFam" id="3.10.290.10:FF:000001">
    <property type="entry name" value="30S ribosomal protein S4"/>
    <property type="match status" value="1"/>
</dbReference>
<dbReference type="Gene3D" id="1.10.1050.10">
    <property type="entry name" value="Ribosomal Protein S4 Delta 41, Chain A, domain 1"/>
    <property type="match status" value="1"/>
</dbReference>
<dbReference type="Gene3D" id="3.10.290.10">
    <property type="entry name" value="RNA-binding S4 domain"/>
    <property type="match status" value="1"/>
</dbReference>
<dbReference type="HAMAP" id="MF_01306_B">
    <property type="entry name" value="Ribosomal_uS4_B"/>
    <property type="match status" value="1"/>
</dbReference>
<dbReference type="InterPro" id="IPR022801">
    <property type="entry name" value="Ribosomal_uS4"/>
</dbReference>
<dbReference type="InterPro" id="IPR005709">
    <property type="entry name" value="Ribosomal_uS4_bac-type"/>
</dbReference>
<dbReference type="InterPro" id="IPR018079">
    <property type="entry name" value="Ribosomal_uS4_CS"/>
</dbReference>
<dbReference type="InterPro" id="IPR001912">
    <property type="entry name" value="Ribosomal_uS4_N"/>
</dbReference>
<dbReference type="InterPro" id="IPR002942">
    <property type="entry name" value="S4_RNA-bd"/>
</dbReference>
<dbReference type="InterPro" id="IPR036986">
    <property type="entry name" value="S4_RNA-bd_sf"/>
</dbReference>
<dbReference type="NCBIfam" id="NF003717">
    <property type="entry name" value="PRK05327.1"/>
    <property type="match status" value="1"/>
</dbReference>
<dbReference type="NCBIfam" id="TIGR01017">
    <property type="entry name" value="rpsD_bact"/>
    <property type="match status" value="1"/>
</dbReference>
<dbReference type="PANTHER" id="PTHR11831">
    <property type="entry name" value="30S 40S RIBOSOMAL PROTEIN"/>
    <property type="match status" value="1"/>
</dbReference>
<dbReference type="PANTHER" id="PTHR11831:SF4">
    <property type="entry name" value="SMALL RIBOSOMAL SUBUNIT PROTEIN US4M"/>
    <property type="match status" value="1"/>
</dbReference>
<dbReference type="Pfam" id="PF00163">
    <property type="entry name" value="Ribosomal_S4"/>
    <property type="match status" value="1"/>
</dbReference>
<dbReference type="Pfam" id="PF01479">
    <property type="entry name" value="S4"/>
    <property type="match status" value="1"/>
</dbReference>
<dbReference type="SMART" id="SM01390">
    <property type="entry name" value="Ribosomal_S4"/>
    <property type="match status" value="1"/>
</dbReference>
<dbReference type="SMART" id="SM00363">
    <property type="entry name" value="S4"/>
    <property type="match status" value="1"/>
</dbReference>
<dbReference type="SUPFAM" id="SSF55174">
    <property type="entry name" value="Alpha-L RNA-binding motif"/>
    <property type="match status" value="1"/>
</dbReference>
<dbReference type="PROSITE" id="PS00632">
    <property type="entry name" value="RIBOSOMAL_S4"/>
    <property type="match status" value="1"/>
</dbReference>
<dbReference type="PROSITE" id="PS50889">
    <property type="entry name" value="S4"/>
    <property type="match status" value="1"/>
</dbReference>
<accession>B1YRQ4</accession>
<reference key="1">
    <citation type="submission" date="2008-04" db="EMBL/GenBank/DDBJ databases">
        <title>Complete sequence of chromosome 1 of Burkholderia ambifaria MC40-6.</title>
        <authorList>
            <person name="Copeland A."/>
            <person name="Lucas S."/>
            <person name="Lapidus A."/>
            <person name="Glavina del Rio T."/>
            <person name="Dalin E."/>
            <person name="Tice H."/>
            <person name="Pitluck S."/>
            <person name="Chain P."/>
            <person name="Malfatti S."/>
            <person name="Shin M."/>
            <person name="Vergez L."/>
            <person name="Lang D."/>
            <person name="Schmutz J."/>
            <person name="Larimer F."/>
            <person name="Land M."/>
            <person name="Hauser L."/>
            <person name="Kyrpides N."/>
            <person name="Lykidis A."/>
            <person name="Ramette A."/>
            <person name="Konstantinidis K."/>
            <person name="Tiedje J."/>
            <person name="Richardson P."/>
        </authorList>
    </citation>
    <scope>NUCLEOTIDE SEQUENCE [LARGE SCALE GENOMIC DNA]</scope>
    <source>
        <strain>MC40-6</strain>
    </source>
</reference>
<proteinExistence type="inferred from homology"/>
<sequence length="207" mass="23172">MARYIGPKAKLSRREGTDLFLKSARRSLADKCKLDSKPGQHGRTSGARTSDYGTQLREKQKVKRIYGVLERQFRRYFAEADRRKGNTGENLLQLLESRLDNVVYRMGFGSTRAEARQLVSHKSITVNGVVANVPSQQVKAGDVVAIREKAKKQARIVEALSLAEQGGMPSWVAVDAKKFEGTFKQMPERADIAGDINESLIVELYSR</sequence>
<keyword id="KW-0687">Ribonucleoprotein</keyword>
<keyword id="KW-0689">Ribosomal protein</keyword>
<keyword id="KW-0694">RNA-binding</keyword>
<keyword id="KW-0699">rRNA-binding</keyword>
<gene>
    <name evidence="1" type="primary">rpsD</name>
    <name type="ordered locus">BamMC406_0301</name>
</gene>
<evidence type="ECO:0000255" key="1">
    <source>
        <dbReference type="HAMAP-Rule" id="MF_01306"/>
    </source>
</evidence>
<evidence type="ECO:0000256" key="2">
    <source>
        <dbReference type="SAM" id="MobiDB-lite"/>
    </source>
</evidence>
<evidence type="ECO:0000305" key="3"/>
<organism>
    <name type="scientific">Burkholderia ambifaria (strain MC40-6)</name>
    <dbReference type="NCBI Taxonomy" id="398577"/>
    <lineage>
        <taxon>Bacteria</taxon>
        <taxon>Pseudomonadati</taxon>
        <taxon>Pseudomonadota</taxon>
        <taxon>Betaproteobacteria</taxon>
        <taxon>Burkholderiales</taxon>
        <taxon>Burkholderiaceae</taxon>
        <taxon>Burkholderia</taxon>
        <taxon>Burkholderia cepacia complex</taxon>
    </lineage>
</organism>
<name>RS4_BURA4</name>
<protein>
    <recommendedName>
        <fullName evidence="1">Small ribosomal subunit protein uS4</fullName>
    </recommendedName>
    <alternativeName>
        <fullName evidence="3">30S ribosomal protein S4</fullName>
    </alternativeName>
</protein>
<comment type="function">
    <text evidence="1">One of the primary rRNA binding proteins, it binds directly to 16S rRNA where it nucleates assembly of the body of the 30S subunit.</text>
</comment>
<comment type="function">
    <text evidence="1">With S5 and S12 plays an important role in translational accuracy.</text>
</comment>
<comment type="subunit">
    <text evidence="1">Part of the 30S ribosomal subunit. Contacts protein S5. The interaction surface between S4 and S5 is involved in control of translational fidelity.</text>
</comment>
<comment type="similarity">
    <text evidence="1">Belongs to the universal ribosomal protein uS4 family.</text>
</comment>